<dbReference type="EC" id="3.6.5.n1" evidence="1"/>
<dbReference type="EMBL" id="CT573213">
    <property type="protein sequence ID" value="CAJ60652.1"/>
    <property type="molecule type" value="Genomic_DNA"/>
</dbReference>
<dbReference type="RefSeq" id="WP_011603175.1">
    <property type="nucleotide sequence ID" value="NC_008278.1"/>
</dbReference>
<dbReference type="SMR" id="Q0RP81"/>
<dbReference type="STRING" id="326424.FRAAL2003"/>
<dbReference type="KEGG" id="fal:FRAAL2003"/>
<dbReference type="eggNOG" id="COG0481">
    <property type="taxonomic scope" value="Bacteria"/>
</dbReference>
<dbReference type="HOGENOM" id="CLU_009995_3_3_11"/>
<dbReference type="OrthoDB" id="9801472at2"/>
<dbReference type="Proteomes" id="UP000000657">
    <property type="component" value="Chromosome"/>
</dbReference>
<dbReference type="GO" id="GO:0005886">
    <property type="term" value="C:plasma membrane"/>
    <property type="evidence" value="ECO:0007669"/>
    <property type="project" value="UniProtKB-SubCell"/>
</dbReference>
<dbReference type="GO" id="GO:0005525">
    <property type="term" value="F:GTP binding"/>
    <property type="evidence" value="ECO:0007669"/>
    <property type="project" value="UniProtKB-UniRule"/>
</dbReference>
<dbReference type="GO" id="GO:0003924">
    <property type="term" value="F:GTPase activity"/>
    <property type="evidence" value="ECO:0007669"/>
    <property type="project" value="UniProtKB-UniRule"/>
</dbReference>
<dbReference type="GO" id="GO:0043022">
    <property type="term" value="F:ribosome binding"/>
    <property type="evidence" value="ECO:0007669"/>
    <property type="project" value="UniProtKB-UniRule"/>
</dbReference>
<dbReference type="GO" id="GO:0003746">
    <property type="term" value="F:translation elongation factor activity"/>
    <property type="evidence" value="ECO:0007669"/>
    <property type="project" value="UniProtKB-UniRule"/>
</dbReference>
<dbReference type="GO" id="GO:0045727">
    <property type="term" value="P:positive regulation of translation"/>
    <property type="evidence" value="ECO:0007669"/>
    <property type="project" value="UniProtKB-UniRule"/>
</dbReference>
<dbReference type="CDD" id="cd03699">
    <property type="entry name" value="EF4_II"/>
    <property type="match status" value="1"/>
</dbReference>
<dbReference type="CDD" id="cd16260">
    <property type="entry name" value="EF4_III"/>
    <property type="match status" value="1"/>
</dbReference>
<dbReference type="CDD" id="cd01890">
    <property type="entry name" value="LepA"/>
    <property type="match status" value="1"/>
</dbReference>
<dbReference type="CDD" id="cd03709">
    <property type="entry name" value="lepA_C"/>
    <property type="match status" value="1"/>
</dbReference>
<dbReference type="FunFam" id="3.40.50.300:FF:000078">
    <property type="entry name" value="Elongation factor 4"/>
    <property type="match status" value="1"/>
</dbReference>
<dbReference type="FunFam" id="2.40.30.10:FF:000015">
    <property type="entry name" value="Translation factor GUF1, mitochondrial"/>
    <property type="match status" value="1"/>
</dbReference>
<dbReference type="FunFam" id="3.30.70.240:FF:000007">
    <property type="entry name" value="Translation factor GUF1, mitochondrial"/>
    <property type="match status" value="1"/>
</dbReference>
<dbReference type="FunFam" id="3.30.70.2570:FF:000001">
    <property type="entry name" value="Translation factor GUF1, mitochondrial"/>
    <property type="match status" value="1"/>
</dbReference>
<dbReference type="FunFam" id="3.30.70.870:FF:000004">
    <property type="entry name" value="Translation factor GUF1, mitochondrial"/>
    <property type="match status" value="1"/>
</dbReference>
<dbReference type="Gene3D" id="3.30.70.240">
    <property type="match status" value="1"/>
</dbReference>
<dbReference type="Gene3D" id="3.30.70.2570">
    <property type="entry name" value="Elongation factor 4, C-terminal domain"/>
    <property type="match status" value="1"/>
</dbReference>
<dbReference type="Gene3D" id="3.30.70.870">
    <property type="entry name" value="Elongation Factor G (Translational Gtpase), domain 3"/>
    <property type="match status" value="1"/>
</dbReference>
<dbReference type="Gene3D" id="3.40.50.300">
    <property type="entry name" value="P-loop containing nucleotide triphosphate hydrolases"/>
    <property type="match status" value="1"/>
</dbReference>
<dbReference type="Gene3D" id="2.40.30.10">
    <property type="entry name" value="Translation factors"/>
    <property type="match status" value="1"/>
</dbReference>
<dbReference type="HAMAP" id="MF_00071">
    <property type="entry name" value="LepA"/>
    <property type="match status" value="1"/>
</dbReference>
<dbReference type="InterPro" id="IPR006297">
    <property type="entry name" value="EF-4"/>
</dbReference>
<dbReference type="InterPro" id="IPR035647">
    <property type="entry name" value="EFG_III/V"/>
</dbReference>
<dbReference type="InterPro" id="IPR000640">
    <property type="entry name" value="EFG_V-like"/>
</dbReference>
<dbReference type="InterPro" id="IPR004161">
    <property type="entry name" value="EFTu-like_2"/>
</dbReference>
<dbReference type="InterPro" id="IPR031157">
    <property type="entry name" value="G_TR_CS"/>
</dbReference>
<dbReference type="InterPro" id="IPR038363">
    <property type="entry name" value="LepA_C_sf"/>
</dbReference>
<dbReference type="InterPro" id="IPR013842">
    <property type="entry name" value="LepA_CTD"/>
</dbReference>
<dbReference type="InterPro" id="IPR035654">
    <property type="entry name" value="LepA_IV"/>
</dbReference>
<dbReference type="InterPro" id="IPR027417">
    <property type="entry name" value="P-loop_NTPase"/>
</dbReference>
<dbReference type="InterPro" id="IPR005225">
    <property type="entry name" value="Small_GTP-bd"/>
</dbReference>
<dbReference type="InterPro" id="IPR000795">
    <property type="entry name" value="T_Tr_GTP-bd_dom"/>
</dbReference>
<dbReference type="InterPro" id="IPR009000">
    <property type="entry name" value="Transl_B-barrel_sf"/>
</dbReference>
<dbReference type="NCBIfam" id="TIGR01393">
    <property type="entry name" value="lepA"/>
    <property type="match status" value="1"/>
</dbReference>
<dbReference type="NCBIfam" id="TIGR00231">
    <property type="entry name" value="small_GTP"/>
    <property type="match status" value="1"/>
</dbReference>
<dbReference type="PANTHER" id="PTHR43512:SF4">
    <property type="entry name" value="TRANSLATION FACTOR GUF1 HOMOLOG, CHLOROPLASTIC"/>
    <property type="match status" value="1"/>
</dbReference>
<dbReference type="PANTHER" id="PTHR43512">
    <property type="entry name" value="TRANSLATION FACTOR GUF1-RELATED"/>
    <property type="match status" value="1"/>
</dbReference>
<dbReference type="Pfam" id="PF00679">
    <property type="entry name" value="EFG_C"/>
    <property type="match status" value="1"/>
</dbReference>
<dbReference type="Pfam" id="PF00009">
    <property type="entry name" value="GTP_EFTU"/>
    <property type="match status" value="1"/>
</dbReference>
<dbReference type="Pfam" id="PF03144">
    <property type="entry name" value="GTP_EFTU_D2"/>
    <property type="match status" value="1"/>
</dbReference>
<dbReference type="Pfam" id="PF06421">
    <property type="entry name" value="LepA_C"/>
    <property type="match status" value="1"/>
</dbReference>
<dbReference type="PRINTS" id="PR00315">
    <property type="entry name" value="ELONGATNFCT"/>
</dbReference>
<dbReference type="SMART" id="SM00838">
    <property type="entry name" value="EFG_C"/>
    <property type="match status" value="1"/>
</dbReference>
<dbReference type="SUPFAM" id="SSF54980">
    <property type="entry name" value="EF-G C-terminal domain-like"/>
    <property type="match status" value="2"/>
</dbReference>
<dbReference type="SUPFAM" id="SSF52540">
    <property type="entry name" value="P-loop containing nucleoside triphosphate hydrolases"/>
    <property type="match status" value="1"/>
</dbReference>
<dbReference type="SUPFAM" id="SSF50447">
    <property type="entry name" value="Translation proteins"/>
    <property type="match status" value="1"/>
</dbReference>
<dbReference type="PROSITE" id="PS00301">
    <property type="entry name" value="G_TR_1"/>
    <property type="match status" value="1"/>
</dbReference>
<dbReference type="PROSITE" id="PS51722">
    <property type="entry name" value="G_TR_2"/>
    <property type="match status" value="1"/>
</dbReference>
<proteinExistence type="inferred from homology"/>
<name>LEPA_FRAAA</name>
<keyword id="KW-1003">Cell membrane</keyword>
<keyword id="KW-0342">GTP-binding</keyword>
<keyword id="KW-0378">Hydrolase</keyword>
<keyword id="KW-0472">Membrane</keyword>
<keyword id="KW-0547">Nucleotide-binding</keyword>
<keyword id="KW-0648">Protein biosynthesis</keyword>
<keyword id="KW-1185">Reference proteome</keyword>
<reference key="1">
    <citation type="journal article" date="2007" name="Genome Res.">
        <title>Genome characteristics of facultatively symbiotic Frankia sp. strains reflect host range and host plant biogeography.</title>
        <authorList>
            <person name="Normand P."/>
            <person name="Lapierre P."/>
            <person name="Tisa L.S."/>
            <person name="Gogarten J.P."/>
            <person name="Alloisio N."/>
            <person name="Bagnarol E."/>
            <person name="Bassi C.A."/>
            <person name="Berry A.M."/>
            <person name="Bickhart D.M."/>
            <person name="Choisne N."/>
            <person name="Couloux A."/>
            <person name="Cournoyer B."/>
            <person name="Cruveiller S."/>
            <person name="Daubin V."/>
            <person name="Demange N."/>
            <person name="Francino M.P."/>
            <person name="Goltsman E."/>
            <person name="Huang Y."/>
            <person name="Kopp O.R."/>
            <person name="Labarre L."/>
            <person name="Lapidus A."/>
            <person name="Lavire C."/>
            <person name="Marechal J."/>
            <person name="Martinez M."/>
            <person name="Mastronunzio J.E."/>
            <person name="Mullin B.C."/>
            <person name="Niemann J."/>
            <person name="Pujic P."/>
            <person name="Rawnsley T."/>
            <person name="Rouy Z."/>
            <person name="Schenowitz C."/>
            <person name="Sellstedt A."/>
            <person name="Tavares F."/>
            <person name="Tomkins J.P."/>
            <person name="Vallenet D."/>
            <person name="Valverde C."/>
            <person name="Wall L.G."/>
            <person name="Wang Y."/>
            <person name="Medigue C."/>
            <person name="Benson D.R."/>
        </authorList>
    </citation>
    <scope>NUCLEOTIDE SEQUENCE [LARGE SCALE GENOMIC DNA]</scope>
    <source>
        <strain>DSM 45986 / CECT 9034 / ACN14a</strain>
    </source>
</reference>
<protein>
    <recommendedName>
        <fullName evidence="1">Elongation factor 4</fullName>
        <shortName evidence="1">EF-4</shortName>
        <ecNumber evidence="1">3.6.5.n1</ecNumber>
    </recommendedName>
    <alternativeName>
        <fullName evidence="1">Ribosomal back-translocase LepA</fullName>
    </alternativeName>
</protein>
<comment type="function">
    <text evidence="1">Required for accurate and efficient protein synthesis under certain stress conditions. May act as a fidelity factor of the translation reaction, by catalyzing a one-codon backward translocation of tRNAs on improperly translocated ribosomes. Back-translocation proceeds from a post-translocation (POST) complex to a pre-translocation (PRE) complex, thus giving elongation factor G a second chance to translocate the tRNAs correctly. Binds to ribosomes in a GTP-dependent manner.</text>
</comment>
<comment type="catalytic activity">
    <reaction evidence="1">
        <text>GTP + H2O = GDP + phosphate + H(+)</text>
        <dbReference type="Rhea" id="RHEA:19669"/>
        <dbReference type="ChEBI" id="CHEBI:15377"/>
        <dbReference type="ChEBI" id="CHEBI:15378"/>
        <dbReference type="ChEBI" id="CHEBI:37565"/>
        <dbReference type="ChEBI" id="CHEBI:43474"/>
        <dbReference type="ChEBI" id="CHEBI:58189"/>
        <dbReference type="EC" id="3.6.5.n1"/>
    </reaction>
</comment>
<comment type="subcellular location">
    <subcellularLocation>
        <location evidence="1">Cell membrane</location>
        <topology evidence="1">Peripheral membrane protein</topology>
        <orientation evidence="1">Cytoplasmic side</orientation>
    </subcellularLocation>
</comment>
<comment type="similarity">
    <text evidence="1">Belongs to the TRAFAC class translation factor GTPase superfamily. Classic translation factor GTPase family. LepA subfamily.</text>
</comment>
<feature type="chain" id="PRO_1000092401" description="Elongation factor 4">
    <location>
        <begin position="1"/>
        <end position="615"/>
    </location>
</feature>
<feature type="domain" description="tr-type G">
    <location>
        <begin position="14"/>
        <end position="196"/>
    </location>
</feature>
<feature type="binding site" evidence="1">
    <location>
        <begin position="26"/>
        <end position="31"/>
    </location>
    <ligand>
        <name>GTP</name>
        <dbReference type="ChEBI" id="CHEBI:37565"/>
    </ligand>
</feature>
<feature type="binding site" evidence="1">
    <location>
        <begin position="143"/>
        <end position="146"/>
    </location>
    <ligand>
        <name>GTP</name>
        <dbReference type="ChEBI" id="CHEBI:37565"/>
    </ligand>
</feature>
<evidence type="ECO:0000255" key="1">
    <source>
        <dbReference type="HAMAP-Rule" id="MF_00071"/>
    </source>
</evidence>
<organism>
    <name type="scientific">Frankia alni (strain DSM 45986 / CECT 9034 / ACN14a)</name>
    <dbReference type="NCBI Taxonomy" id="326424"/>
    <lineage>
        <taxon>Bacteria</taxon>
        <taxon>Bacillati</taxon>
        <taxon>Actinomycetota</taxon>
        <taxon>Actinomycetes</taxon>
        <taxon>Frankiales</taxon>
        <taxon>Frankiaceae</taxon>
        <taxon>Frankia</taxon>
    </lineage>
</organism>
<sequence length="615" mass="67375">MSAAPHLAPGADPAMIRNFCIIAHIDHGKSTLADRMLGVTGVVEARNMRAQYLDRMDIERERGITIKAQNVRLPWRAQDGQDYILHLIDTPGHVDFSYEVSRSLAACEGAVLLVDAAQGIEAQTLANLYLAIENDLTIVPVLNKIDLPAAQPEKYAEEIAAIIGCDPGDVLRVSGKTGQGVPELLNEIVRQVPAPVGNPAGPARAMIFDSVYDIYRGVITYVRVIDGTLTTRDRCLMMSTGASHETLEVGVISPDPHPTGSLSVGEVGYVIPGVKDVRQARVGDTVTTTRNPATEMLGGYRDPLPMVYSGLYPIDGSEYPALREALDKLQLNDAALTYEPETSAALGFGFRCGFLGLLHLEIVRERLEREFNLTLISTAPNVVYRVVMEDLSEVTVTNPSDWPGGKIAEVYEPVVDAMLLLPTDFVGAVMELCQGRRGVLKGMDYLSTDRVELKYTLPLGEIIFDFFDALKSRTRGYASLDYEPAGEQLADLVKVDILLQGETVDAFSAIVHKEKAYSYGVAMTTKLRELIPRQQFEVPIQAAIGSRIIARENIRAIRKDVLAKCYGGDITRKRKLLEKQKEGKKRMKTIGRVEVPQEAFIAALSTDTGKSATSK</sequence>
<gene>
    <name evidence="1" type="primary">lepA</name>
    <name type="ordered locus">FRAAL2003</name>
</gene>
<accession>Q0RP81</accession>